<accession>B4RV29</accession>
<accession>F2G366</accession>
<protein>
    <recommendedName>
        <fullName evidence="1">Flagellar P-ring protein</fullName>
    </recommendedName>
    <alternativeName>
        <fullName evidence="1">Basal body P-ring protein</fullName>
    </alternativeName>
</protein>
<organism>
    <name type="scientific">Alteromonas mediterranea (strain DSM 17117 / CIP 110805 / LMG 28347 / Deep ecotype)</name>
    <dbReference type="NCBI Taxonomy" id="1774373"/>
    <lineage>
        <taxon>Bacteria</taxon>
        <taxon>Pseudomonadati</taxon>
        <taxon>Pseudomonadota</taxon>
        <taxon>Gammaproteobacteria</taxon>
        <taxon>Alteromonadales</taxon>
        <taxon>Alteromonadaceae</taxon>
        <taxon>Alteromonas/Salinimonas group</taxon>
        <taxon>Alteromonas</taxon>
    </lineage>
</organism>
<name>FLGI_ALTMD</name>
<gene>
    <name evidence="1" type="primary">flgI</name>
    <name type="ordered locus">MADE_1005740</name>
</gene>
<feature type="signal peptide" evidence="1">
    <location>
        <begin position="1"/>
        <end position="21"/>
    </location>
</feature>
<feature type="chain" id="PRO_1000123966" description="Flagellar P-ring protein">
    <location>
        <begin position="22"/>
        <end position="370"/>
    </location>
</feature>
<comment type="function">
    <text evidence="1">Assembles around the rod to form the L-ring and probably protects the motor/basal body from shearing forces during rotation.</text>
</comment>
<comment type="subunit">
    <text evidence="1">The basal body constitutes a major portion of the flagellar organelle and consists of four rings (L,P,S, and M) mounted on a central rod.</text>
</comment>
<comment type="subcellular location">
    <subcellularLocation>
        <location evidence="1">Periplasm</location>
    </subcellularLocation>
    <subcellularLocation>
        <location evidence="1">Bacterial flagellum basal body</location>
    </subcellularLocation>
</comment>
<comment type="similarity">
    <text evidence="1">Belongs to the FlgI family.</text>
</comment>
<keyword id="KW-0975">Bacterial flagellum</keyword>
<keyword id="KW-0574">Periplasm</keyword>
<keyword id="KW-0732">Signal</keyword>
<sequence>MRLFSVVLAVFTLLLPSQAFAQRIKDVASIQGVRSNQLVGYGLVVGLPGTGEQSPFTEQSFRTMLRNFGISLDANTKPKIRNVAAVAVHADLPAFAKPGQTIDITVSSVGEAASLQGGTLLQTFLRGVDGKVYAVAQGSLVVSGFGAQGGDGSRIVVNTPTVGRIPNGAMVEQSVPTGFANGDTLTLNLHYPDFSTAKSLADTINERLGAQPENGYVIAKPIDAASVRVSAPRDVGQRVGFLATLENFEFTPADAPARVVINSRTGTIVIGSDVRLLPAAITHGGLTVTISENQQVTQPNAFADGQTAITTQSIVDVDLADSRMFKFEPGVTLDQLVRAVNEVGAAPGDLMAILEALRHAGALRGELVII</sequence>
<evidence type="ECO:0000255" key="1">
    <source>
        <dbReference type="HAMAP-Rule" id="MF_00416"/>
    </source>
</evidence>
<reference key="1">
    <citation type="journal article" date="2008" name="ISME J.">
        <title>Comparative genomics of two ecotypes of the marine planktonic copiotroph Alteromonas macleodii suggests alternative lifestyles associated with different kinds of particulate organic matter.</title>
        <authorList>
            <person name="Ivars-Martinez E."/>
            <person name="Martin-Cuadrado A.-B."/>
            <person name="D'Auria G."/>
            <person name="Mira A."/>
            <person name="Ferriera S."/>
            <person name="Johnson J."/>
            <person name="Friedman R."/>
            <person name="Rodriguez-Valera F."/>
        </authorList>
    </citation>
    <scope>NUCLEOTIDE SEQUENCE [LARGE SCALE GENOMIC DNA]</scope>
    <source>
        <strain>DSM 17117 / CIP 110805 / LMG 28347 / Deep ecotype</strain>
    </source>
</reference>
<proteinExistence type="inferred from homology"/>
<dbReference type="EMBL" id="CP001103">
    <property type="protein sequence ID" value="AEA97290.1"/>
    <property type="molecule type" value="Genomic_DNA"/>
</dbReference>
<dbReference type="RefSeq" id="WP_012517633.1">
    <property type="nucleotide sequence ID" value="NC_011138.3"/>
</dbReference>
<dbReference type="SMR" id="B4RV29"/>
<dbReference type="KEGG" id="amc:MADE_1005740"/>
<dbReference type="HOGENOM" id="CLU_045235_1_0_6"/>
<dbReference type="Proteomes" id="UP000001870">
    <property type="component" value="Chromosome"/>
</dbReference>
<dbReference type="GO" id="GO:0009428">
    <property type="term" value="C:bacterial-type flagellum basal body, distal rod, P ring"/>
    <property type="evidence" value="ECO:0007669"/>
    <property type="project" value="InterPro"/>
</dbReference>
<dbReference type="GO" id="GO:0030288">
    <property type="term" value="C:outer membrane-bounded periplasmic space"/>
    <property type="evidence" value="ECO:0007669"/>
    <property type="project" value="InterPro"/>
</dbReference>
<dbReference type="GO" id="GO:0005198">
    <property type="term" value="F:structural molecule activity"/>
    <property type="evidence" value="ECO:0007669"/>
    <property type="project" value="InterPro"/>
</dbReference>
<dbReference type="GO" id="GO:0071973">
    <property type="term" value="P:bacterial-type flagellum-dependent cell motility"/>
    <property type="evidence" value="ECO:0007669"/>
    <property type="project" value="InterPro"/>
</dbReference>
<dbReference type="HAMAP" id="MF_00416">
    <property type="entry name" value="FlgI"/>
    <property type="match status" value="1"/>
</dbReference>
<dbReference type="InterPro" id="IPR001782">
    <property type="entry name" value="Flag_FlgI"/>
</dbReference>
<dbReference type="NCBIfam" id="NF003676">
    <property type="entry name" value="PRK05303.1"/>
    <property type="match status" value="1"/>
</dbReference>
<dbReference type="PANTHER" id="PTHR30381">
    <property type="entry name" value="FLAGELLAR P-RING PERIPLASMIC PROTEIN FLGI"/>
    <property type="match status" value="1"/>
</dbReference>
<dbReference type="PANTHER" id="PTHR30381:SF0">
    <property type="entry name" value="FLAGELLAR P-RING PROTEIN"/>
    <property type="match status" value="1"/>
</dbReference>
<dbReference type="Pfam" id="PF02119">
    <property type="entry name" value="FlgI"/>
    <property type="match status" value="1"/>
</dbReference>
<dbReference type="PRINTS" id="PR01010">
    <property type="entry name" value="FLGPRINGFLGI"/>
</dbReference>